<name>CODY_CLOBH</name>
<proteinExistence type="inferred from homology"/>
<feature type="chain" id="PRO_1000051533" description="Global transcriptional regulator CodY">
    <location>
        <begin position="1"/>
        <end position="258"/>
    </location>
</feature>
<feature type="DNA-binding region" description="H-T-H motif" evidence="1">
    <location>
        <begin position="204"/>
        <end position="223"/>
    </location>
</feature>
<feature type="region of interest" description="GAF domain" evidence="1">
    <location>
        <begin position="1"/>
        <end position="156"/>
    </location>
</feature>
<accession>A5I4L4</accession>
<accession>A7G5R3</accession>
<protein>
    <recommendedName>
        <fullName evidence="1">Global transcriptional regulator CodY</fullName>
    </recommendedName>
</protein>
<keyword id="KW-0963">Cytoplasm</keyword>
<keyword id="KW-0238">DNA-binding</keyword>
<keyword id="KW-1185">Reference proteome</keyword>
<keyword id="KW-0678">Repressor</keyword>
<keyword id="KW-0804">Transcription</keyword>
<keyword id="KW-0805">Transcription regulation</keyword>
<organism>
    <name type="scientific">Clostridium botulinum (strain Hall / ATCC 3502 / NCTC 13319 / Type A)</name>
    <dbReference type="NCBI Taxonomy" id="441771"/>
    <lineage>
        <taxon>Bacteria</taxon>
        <taxon>Bacillati</taxon>
        <taxon>Bacillota</taxon>
        <taxon>Clostridia</taxon>
        <taxon>Eubacteriales</taxon>
        <taxon>Clostridiaceae</taxon>
        <taxon>Clostridium</taxon>
    </lineage>
</organism>
<reference key="1">
    <citation type="journal article" date="2007" name="Genome Res.">
        <title>Genome sequence of a proteolytic (Group I) Clostridium botulinum strain Hall A and comparative analysis of the clostridial genomes.</title>
        <authorList>
            <person name="Sebaihia M."/>
            <person name="Peck M.W."/>
            <person name="Minton N.P."/>
            <person name="Thomson N.R."/>
            <person name="Holden M.T.G."/>
            <person name="Mitchell W.J."/>
            <person name="Carter A.T."/>
            <person name="Bentley S.D."/>
            <person name="Mason D.R."/>
            <person name="Crossman L."/>
            <person name="Paul C.J."/>
            <person name="Ivens A."/>
            <person name="Wells-Bennik M.H.J."/>
            <person name="Davis I.J."/>
            <person name="Cerdeno-Tarraga A.M."/>
            <person name="Churcher C."/>
            <person name="Quail M.A."/>
            <person name="Chillingworth T."/>
            <person name="Feltwell T."/>
            <person name="Fraser A."/>
            <person name="Goodhead I."/>
            <person name="Hance Z."/>
            <person name="Jagels K."/>
            <person name="Larke N."/>
            <person name="Maddison M."/>
            <person name="Moule S."/>
            <person name="Mungall K."/>
            <person name="Norbertczak H."/>
            <person name="Rabbinowitsch E."/>
            <person name="Sanders M."/>
            <person name="Simmonds M."/>
            <person name="White B."/>
            <person name="Whithead S."/>
            <person name="Parkhill J."/>
        </authorList>
    </citation>
    <scope>NUCLEOTIDE SEQUENCE [LARGE SCALE GENOMIC DNA]</scope>
    <source>
        <strain>Hall / ATCC 3502 / NCTC 13319 / Type A</strain>
    </source>
</reference>
<reference key="2">
    <citation type="journal article" date="2007" name="PLoS ONE">
        <title>Analysis of the neurotoxin complex genes in Clostridium botulinum A1-A4 and B1 strains: BoNT/A3, /Ba4 and /B1 clusters are located within plasmids.</title>
        <authorList>
            <person name="Smith T.J."/>
            <person name="Hill K.K."/>
            <person name="Foley B.T."/>
            <person name="Detter J.C."/>
            <person name="Munk A.C."/>
            <person name="Bruce D.C."/>
            <person name="Doggett N.A."/>
            <person name="Smith L.A."/>
            <person name="Marks J.D."/>
            <person name="Xie G."/>
            <person name="Brettin T.S."/>
        </authorList>
    </citation>
    <scope>NUCLEOTIDE SEQUENCE [LARGE SCALE GENOMIC DNA]</scope>
    <source>
        <strain>Hall / ATCC 3502 / NCTC 13319 / Type A</strain>
    </source>
</reference>
<sequence length="258" mass="29042">MSSLLDKTRMLNRILQKSGTEPVDFEDICDLLSDVLACNVYIISRKGKILGSKFYSGFECDEVREVVLKENRFPDFYNNKLLNVNETLSNSPNHDKCVFDNLKDCSINNKLSTIVPINGNRERLGTLLLARFDKEFTDEDLVLAEYSATIIGLEILRSKQDQIEEEARKKAVVQLAIGTLSYSELEAVEHIFNELDGTEGLLVASKIADKVGITRSVIVNALRKFESAGVIESRSLGMKGTHIRILNDKLLEELKKIK</sequence>
<comment type="function">
    <text evidence="1">DNA-binding global transcriptional regulator which is involved in the adaptive response to starvation and acts by directly or indirectly controlling the expression of numerous genes in response to nutrient availability. During rapid exponential growth, CodY is highly active and represses genes whose products allow adaptation to nutrient depletion.</text>
</comment>
<comment type="subcellular location">
    <subcellularLocation>
        <location evidence="1">Cytoplasm</location>
    </subcellularLocation>
</comment>
<comment type="similarity">
    <text evidence="1">Belongs to the CodY family.</text>
</comment>
<gene>
    <name evidence="1" type="primary">codY</name>
    <name type="ordered locus">CBO2436</name>
    <name type="ordered locus">CLC_2284</name>
</gene>
<dbReference type="EMBL" id="CP000727">
    <property type="protein sequence ID" value="ABS39080.1"/>
    <property type="molecule type" value="Genomic_DNA"/>
</dbReference>
<dbReference type="EMBL" id="AM412317">
    <property type="protein sequence ID" value="CAL83986.1"/>
    <property type="molecule type" value="Genomic_DNA"/>
</dbReference>
<dbReference type="RefSeq" id="WP_003362579.1">
    <property type="nucleotide sequence ID" value="NC_009698.1"/>
</dbReference>
<dbReference type="RefSeq" id="YP_001254935.1">
    <property type="nucleotide sequence ID" value="NC_009495.1"/>
</dbReference>
<dbReference type="RefSeq" id="YP_001388128.1">
    <property type="nucleotide sequence ID" value="NC_009698.1"/>
</dbReference>
<dbReference type="SMR" id="A5I4L4"/>
<dbReference type="GeneID" id="92939187"/>
<dbReference type="KEGG" id="cbh:CLC_2284"/>
<dbReference type="KEGG" id="cbo:CBO2436"/>
<dbReference type="PATRIC" id="fig|413999.7.peg.2413"/>
<dbReference type="HOGENOM" id="CLU_089581_0_0_9"/>
<dbReference type="PRO" id="PR:A5I4L4"/>
<dbReference type="Proteomes" id="UP000001986">
    <property type="component" value="Chromosome"/>
</dbReference>
<dbReference type="GO" id="GO:0005737">
    <property type="term" value="C:cytoplasm"/>
    <property type="evidence" value="ECO:0007669"/>
    <property type="project" value="UniProtKB-SubCell"/>
</dbReference>
<dbReference type="GO" id="GO:0003677">
    <property type="term" value="F:DNA binding"/>
    <property type="evidence" value="ECO:0007669"/>
    <property type="project" value="UniProtKB-UniRule"/>
</dbReference>
<dbReference type="GO" id="GO:0003700">
    <property type="term" value="F:DNA-binding transcription factor activity"/>
    <property type="evidence" value="ECO:0007669"/>
    <property type="project" value="InterPro"/>
</dbReference>
<dbReference type="GO" id="GO:0005525">
    <property type="term" value="F:GTP binding"/>
    <property type="evidence" value="ECO:0007669"/>
    <property type="project" value="InterPro"/>
</dbReference>
<dbReference type="GO" id="GO:0045892">
    <property type="term" value="P:negative regulation of DNA-templated transcription"/>
    <property type="evidence" value="ECO:0007669"/>
    <property type="project" value="UniProtKB-UniRule"/>
</dbReference>
<dbReference type="GO" id="GO:0006355">
    <property type="term" value="P:regulation of DNA-templated transcription"/>
    <property type="evidence" value="ECO:0000318"/>
    <property type="project" value="GO_Central"/>
</dbReference>
<dbReference type="FunFam" id="1.10.10.10:FF:000034">
    <property type="entry name" value="GTP-sensing transcriptional pleiotropic repressor CodY"/>
    <property type="match status" value="1"/>
</dbReference>
<dbReference type="FunFam" id="3.30.450.40:FF:000003">
    <property type="entry name" value="GTP-sensing transcriptional pleiotropic repressor CodY"/>
    <property type="match status" value="1"/>
</dbReference>
<dbReference type="Gene3D" id="3.30.450.40">
    <property type="match status" value="1"/>
</dbReference>
<dbReference type="Gene3D" id="1.10.10.10">
    <property type="entry name" value="Winged helix-like DNA-binding domain superfamily/Winged helix DNA-binding domain"/>
    <property type="match status" value="1"/>
</dbReference>
<dbReference type="HAMAP" id="MF_00621">
    <property type="entry name" value="HTH_type_CodY"/>
    <property type="match status" value="1"/>
</dbReference>
<dbReference type="InterPro" id="IPR014154">
    <property type="entry name" value="CodY"/>
</dbReference>
<dbReference type="InterPro" id="IPR029016">
    <property type="entry name" value="GAF-like_dom_sf"/>
</dbReference>
<dbReference type="InterPro" id="IPR013198">
    <property type="entry name" value="GTP_trans_reg_CodY_C"/>
</dbReference>
<dbReference type="InterPro" id="IPR010312">
    <property type="entry name" value="Transc_reg_CodY_N"/>
</dbReference>
<dbReference type="InterPro" id="IPR036388">
    <property type="entry name" value="WH-like_DNA-bd_sf"/>
</dbReference>
<dbReference type="InterPro" id="IPR036390">
    <property type="entry name" value="WH_DNA-bd_sf"/>
</dbReference>
<dbReference type="NCBIfam" id="TIGR02787">
    <property type="entry name" value="codY_Gpos"/>
    <property type="match status" value="1"/>
</dbReference>
<dbReference type="NCBIfam" id="NF003170">
    <property type="entry name" value="PRK04158.1"/>
    <property type="match status" value="1"/>
</dbReference>
<dbReference type="PANTHER" id="PTHR40062:SF1">
    <property type="entry name" value="GLOBAL TRANSCRIPTIONAL REGULATOR CODY"/>
    <property type="match status" value="1"/>
</dbReference>
<dbReference type="PANTHER" id="PTHR40062">
    <property type="entry name" value="GTP-SENSING TRANSCRIPTIONAL PLEIOTROPIC REPRESSOR CODY"/>
    <property type="match status" value="1"/>
</dbReference>
<dbReference type="Pfam" id="PF06018">
    <property type="entry name" value="CodY"/>
    <property type="match status" value="1"/>
</dbReference>
<dbReference type="Pfam" id="PF08222">
    <property type="entry name" value="HTH_CodY"/>
    <property type="match status" value="1"/>
</dbReference>
<dbReference type="PIRSF" id="PIRSF011572">
    <property type="entry name" value="GTP_sensing_CodY"/>
    <property type="match status" value="1"/>
</dbReference>
<dbReference type="SUPFAM" id="SSF55781">
    <property type="entry name" value="GAF domain-like"/>
    <property type="match status" value="1"/>
</dbReference>
<dbReference type="SUPFAM" id="SSF46785">
    <property type="entry name" value="Winged helix' DNA-binding domain"/>
    <property type="match status" value="1"/>
</dbReference>
<evidence type="ECO:0000255" key="1">
    <source>
        <dbReference type="HAMAP-Rule" id="MF_00621"/>
    </source>
</evidence>